<name>APY_AEDAL</name>
<feature type="signal peptide" evidence="4">
    <location>
        <begin position="1"/>
        <end position="25"/>
    </location>
</feature>
<feature type="chain" id="PRO_5000623950" description="Apyrase" evidence="10">
    <location>
        <begin position="26"/>
        <end position="564"/>
    </location>
</feature>
<feature type="binding site" evidence="1">
    <location>
        <position position="48"/>
    </location>
    <ligand>
        <name>a divalent metal cation</name>
        <dbReference type="ChEBI" id="CHEBI:60240"/>
        <label>1</label>
    </ligand>
</feature>
<feature type="binding site" evidence="1">
    <location>
        <position position="50"/>
    </location>
    <ligand>
        <name>a divalent metal cation</name>
        <dbReference type="ChEBI" id="CHEBI:60240"/>
        <label>1</label>
    </ligand>
</feature>
<feature type="binding site" evidence="1">
    <location>
        <position position="99"/>
    </location>
    <ligand>
        <name>a divalent metal cation</name>
        <dbReference type="ChEBI" id="CHEBI:60240"/>
        <label>1</label>
    </ligand>
</feature>
<feature type="binding site" evidence="1">
    <location>
        <position position="99"/>
    </location>
    <ligand>
        <name>a divalent metal cation</name>
        <dbReference type="ChEBI" id="CHEBI:60240"/>
        <label>2</label>
    </ligand>
</feature>
<feature type="binding site" evidence="1">
    <location>
        <position position="131"/>
    </location>
    <ligand>
        <name>a divalent metal cation</name>
        <dbReference type="ChEBI" id="CHEBI:60240"/>
        <label>2</label>
    </ligand>
</feature>
<feature type="binding site" evidence="1">
    <location>
        <position position="234"/>
    </location>
    <ligand>
        <name>a divalent metal cation</name>
        <dbReference type="ChEBI" id="CHEBI:60240"/>
        <label>2</label>
    </ligand>
</feature>
<feature type="binding site" evidence="1">
    <location>
        <position position="258"/>
    </location>
    <ligand>
        <name>a divalent metal cation</name>
        <dbReference type="ChEBI" id="CHEBI:60240"/>
        <label>2</label>
    </ligand>
</feature>
<feature type="binding site" evidence="1">
    <location>
        <position position="371"/>
    </location>
    <ligand>
        <name>AMP</name>
        <dbReference type="ChEBI" id="CHEBI:456215"/>
    </ligand>
</feature>
<feature type="binding site" evidence="1">
    <location>
        <position position="406"/>
    </location>
    <ligand>
        <name>AMP</name>
        <dbReference type="ChEBI" id="CHEBI:456215"/>
    </ligand>
</feature>
<feature type="binding site" evidence="1">
    <location>
        <position position="425"/>
    </location>
    <ligand>
        <name>AMP</name>
        <dbReference type="ChEBI" id="CHEBI:456215"/>
    </ligand>
</feature>
<feature type="binding site" evidence="1">
    <location>
        <position position="515"/>
    </location>
    <ligand>
        <name>AMP</name>
        <dbReference type="ChEBI" id="CHEBI:456215"/>
    </ligand>
</feature>
<feature type="site" description="Transition state stabilizer" evidence="1">
    <location>
        <position position="132"/>
    </location>
</feature>
<feature type="site" description="Transition state stabilizer" evidence="1">
    <location>
        <position position="135"/>
    </location>
</feature>
<feature type="glycosylation site" description="N-linked (GlcNAc...) asparagine" evidence="3">
    <location>
        <position position="391"/>
    </location>
</feature>
<feature type="sequence conflict" description="In Ref. 2; AAV90659." evidence="10" ref="2">
    <original>L</original>
    <variation>I</variation>
    <location>
        <position position="14"/>
    </location>
</feature>
<feature type="sequence conflict" description="In Ref. 2; AAV90659." evidence="10" ref="2">
    <original>AM</original>
    <variation>TT</variation>
    <location>
        <begin position="25"/>
        <end position="26"/>
    </location>
</feature>
<feature type="sequence conflict" description="In Ref. 2; AA sequence." evidence="10" ref="2">
    <original>M</original>
    <variation>T</variation>
    <location>
        <position position="26"/>
    </location>
</feature>
<feature type="sequence conflict" description="In Ref. 2; AAV90659." evidence="10" ref="2">
    <original>N</original>
    <variation>S</variation>
    <location>
        <position position="438"/>
    </location>
</feature>
<feature type="sequence conflict" description="In Ref. 2; AAV90659." evidence="10" ref="2">
    <original>L</original>
    <variation>F</variation>
    <location>
        <position position="447"/>
    </location>
</feature>
<feature type="sequence conflict" description="In Ref. 2; AAV90659." evidence="10" ref="2">
    <original>SV</original>
    <variation>KI</variation>
    <location>
        <begin position="472"/>
        <end position="473"/>
    </location>
</feature>
<feature type="sequence conflict" description="In Ref. 2; AAV90659." evidence="10" ref="2">
    <original>R</original>
    <variation>K</variation>
    <location>
        <position position="498"/>
    </location>
</feature>
<feature type="sequence conflict" description="In Ref. 2; AAV90659." evidence="10" ref="2">
    <original>E</original>
    <variation>K</variation>
    <location>
        <position position="522"/>
    </location>
</feature>
<feature type="sequence conflict" description="In Ref. 2; AAV90659." evidence="10" ref="2">
    <original>LD</original>
    <variation>WG</variation>
    <location>
        <begin position="551"/>
        <end position="552"/>
    </location>
</feature>
<accession>E0D877</accession>
<accession>Q5MIX3</accession>
<keyword id="KW-0020">Allergen</keyword>
<keyword id="KW-0067">ATP-binding</keyword>
<keyword id="KW-0903">Direct protein sequencing</keyword>
<keyword id="KW-0325">Glycoprotein</keyword>
<keyword id="KW-1199">Hemostasis impairing toxin</keyword>
<keyword id="KW-0378">Hydrolase</keyword>
<keyword id="KW-0479">Metal-binding</keyword>
<keyword id="KW-0547">Nucleotide-binding</keyword>
<keyword id="KW-1201">Platelet aggregation inhibiting toxin</keyword>
<keyword id="KW-0964">Secreted</keyword>
<keyword id="KW-0732">Signal</keyword>
<keyword id="KW-0800">Toxin</keyword>
<sequence>MAGKPGIQLFVIFLLLSSFAAVVWAMDNMPADKDVSKLFPLTLIHINDLHARFDETNMKSNACTAKDQCIAGIARVYQKIQDLLKEYKSKNAIYLNAGDNFQGTLWYNLLRWQVTADFITKLKPTAMTLGNHEFDHTPKGLAPYLAELDKAGIPTLVANLVMNDDPDLKSSKIQKSIKVTVGGKTIGIIGVLYDKTHEIAQTGKVTLSNAVETVKREAAALKKDKVDIIVVLSHCSYDEDKKIAKEAGQDIDVIVGAHSHSFLYSKESNKPYDQKDKIEGPYPTIVESNNKRKIPIVQAKSFGKYVGRLTLYFDNEGEVKHWEGYPEFIDNKVKQDPKILEALIPWRKKVQEIGSTKVGETTIELDRDSCRDKECTLGVLYADAFADHYTNSSFRPFAIIQAGNFRNPIKVGKITNGDIIEAAPFGSTADLIRLKGDNLWAVAEHSLALDDENRTNCLQVSGLRIVIDPSKSVGSRVVKIDVMDNRNPKSEDLKPLDRNAEYFIALPSYLADGKDGFSAMKEATARWTGPLDSDVFKSYVEKIKKVDKLKLDRVIVCKAGSPCT</sequence>
<dbReference type="EC" id="3.6.1.5" evidence="5"/>
<dbReference type="EMBL" id="AB576780">
    <property type="protein sequence ID" value="BAJ14796.1"/>
    <property type="molecule type" value="mRNA"/>
</dbReference>
<dbReference type="EMBL" id="AY826087">
    <property type="protein sequence ID" value="AAV90659.1"/>
    <property type="molecule type" value="mRNA"/>
</dbReference>
<dbReference type="SMR" id="E0D877"/>
<dbReference type="Allergome" id="1345">
    <property type="allergen name" value="Aed al 1"/>
</dbReference>
<dbReference type="VEuPathDB" id="VectorBase:AALC636_027329"/>
<dbReference type="VEuPathDB" id="VectorBase:AALF004988"/>
<dbReference type="VEuPathDB" id="VectorBase:AALFPA_079132"/>
<dbReference type="BRENDA" id="3.6.1.5">
    <property type="organism ID" value="8486"/>
</dbReference>
<dbReference type="SABIO-RK" id="E0D877"/>
<dbReference type="Proteomes" id="UP000069940">
    <property type="component" value="Unassembled WGS sequence"/>
</dbReference>
<dbReference type="GO" id="GO:0005576">
    <property type="term" value="C:extracellular region"/>
    <property type="evidence" value="ECO:0007669"/>
    <property type="project" value="UniProtKB-SubCell"/>
</dbReference>
<dbReference type="GO" id="GO:0005886">
    <property type="term" value="C:plasma membrane"/>
    <property type="evidence" value="ECO:0007669"/>
    <property type="project" value="TreeGrafter"/>
</dbReference>
<dbReference type="GO" id="GO:0008253">
    <property type="term" value="F:5'-nucleotidase activity"/>
    <property type="evidence" value="ECO:0007669"/>
    <property type="project" value="TreeGrafter"/>
</dbReference>
<dbReference type="GO" id="GO:0004050">
    <property type="term" value="F:apyrase activity"/>
    <property type="evidence" value="ECO:0007669"/>
    <property type="project" value="UniProtKB-EC"/>
</dbReference>
<dbReference type="GO" id="GO:0005524">
    <property type="term" value="F:ATP binding"/>
    <property type="evidence" value="ECO:0007669"/>
    <property type="project" value="UniProtKB-KW"/>
</dbReference>
<dbReference type="GO" id="GO:0046872">
    <property type="term" value="F:metal ion binding"/>
    <property type="evidence" value="ECO:0007669"/>
    <property type="project" value="UniProtKB-KW"/>
</dbReference>
<dbReference type="GO" id="GO:0090729">
    <property type="term" value="F:toxin activity"/>
    <property type="evidence" value="ECO:0007669"/>
    <property type="project" value="UniProtKB-KW"/>
</dbReference>
<dbReference type="GO" id="GO:0006196">
    <property type="term" value="P:AMP catabolic process"/>
    <property type="evidence" value="ECO:0007669"/>
    <property type="project" value="TreeGrafter"/>
</dbReference>
<dbReference type="CDD" id="cd07409">
    <property type="entry name" value="MPP_CD73_N"/>
    <property type="match status" value="1"/>
</dbReference>
<dbReference type="FunFam" id="3.60.21.10:FF:000020">
    <property type="entry name" value="NT5E isoform 4"/>
    <property type="match status" value="1"/>
</dbReference>
<dbReference type="Gene3D" id="3.60.21.10">
    <property type="match status" value="1"/>
</dbReference>
<dbReference type="Gene3D" id="3.90.780.10">
    <property type="entry name" value="5'-Nucleotidase, C-terminal domain"/>
    <property type="match status" value="1"/>
</dbReference>
<dbReference type="InterPro" id="IPR008334">
    <property type="entry name" value="5'-Nucleotdase_C"/>
</dbReference>
<dbReference type="InterPro" id="IPR036907">
    <property type="entry name" value="5'-Nucleotdase_C_sf"/>
</dbReference>
<dbReference type="InterPro" id="IPR006146">
    <property type="entry name" value="5'-Nucleotdase_CS"/>
</dbReference>
<dbReference type="InterPro" id="IPR006179">
    <property type="entry name" value="5_nucleotidase/apyrase"/>
</dbReference>
<dbReference type="InterPro" id="IPR004843">
    <property type="entry name" value="Calcineurin-like_PHP_ApaH"/>
</dbReference>
<dbReference type="InterPro" id="IPR029052">
    <property type="entry name" value="Metallo-depent_PP-like"/>
</dbReference>
<dbReference type="PANTHER" id="PTHR11575">
    <property type="entry name" value="5'-NUCLEOTIDASE-RELATED"/>
    <property type="match status" value="1"/>
</dbReference>
<dbReference type="PANTHER" id="PTHR11575:SF32">
    <property type="entry name" value="APYRASE-LIKE PROTEIN"/>
    <property type="match status" value="1"/>
</dbReference>
<dbReference type="Pfam" id="PF02872">
    <property type="entry name" value="5_nucleotid_C"/>
    <property type="match status" value="1"/>
</dbReference>
<dbReference type="Pfam" id="PF00149">
    <property type="entry name" value="Metallophos"/>
    <property type="match status" value="1"/>
</dbReference>
<dbReference type="PRINTS" id="PR01607">
    <property type="entry name" value="APYRASEFAMLY"/>
</dbReference>
<dbReference type="SUPFAM" id="SSF55816">
    <property type="entry name" value="5'-nucleotidase (syn. UDP-sugar hydrolase), C-terminal domain"/>
    <property type="match status" value="1"/>
</dbReference>
<dbReference type="SUPFAM" id="SSF56300">
    <property type="entry name" value="Metallo-dependent phosphatases"/>
    <property type="match status" value="1"/>
</dbReference>
<dbReference type="PROSITE" id="PS00785">
    <property type="entry name" value="5_NUCLEOTIDASE_1"/>
    <property type="match status" value="1"/>
</dbReference>
<dbReference type="PROSITE" id="PS00786">
    <property type="entry name" value="5_NUCLEOTIDASE_2"/>
    <property type="match status" value="1"/>
</dbReference>
<organism>
    <name type="scientific">Aedes albopictus</name>
    <name type="common">Asian tiger mosquito</name>
    <name type="synonym">Stegomyia albopicta</name>
    <dbReference type="NCBI Taxonomy" id="7160"/>
    <lineage>
        <taxon>Eukaryota</taxon>
        <taxon>Metazoa</taxon>
        <taxon>Ecdysozoa</taxon>
        <taxon>Arthropoda</taxon>
        <taxon>Hexapoda</taxon>
        <taxon>Insecta</taxon>
        <taxon>Pterygota</taxon>
        <taxon>Neoptera</taxon>
        <taxon>Endopterygota</taxon>
        <taxon>Diptera</taxon>
        <taxon>Nematocera</taxon>
        <taxon>Culicoidea</taxon>
        <taxon>Culicidae</taxon>
        <taxon>Culicinae</taxon>
        <taxon>Aedini</taxon>
        <taxon>Aedes</taxon>
        <taxon>Stegomyia</taxon>
    </lineage>
</organism>
<protein>
    <recommendedName>
        <fullName evidence="8 9">Apyrase</fullName>
        <ecNumber evidence="5">3.6.1.5</ecNumber>
    </recommendedName>
    <alternativeName>
        <fullName evidence="2">ATP-diphosphatase</fullName>
        <shortName evidence="2">ADPase</shortName>
    </alternativeName>
    <alternativeName>
        <fullName evidence="9">ATP-diphosphohydrolase</fullName>
    </alternativeName>
    <alternativeName>
        <fullName evidence="2">Adenosine diphosphatase</fullName>
    </alternativeName>
    <allergenName evidence="11">Aed al 1</allergenName>
</protein>
<proteinExistence type="evidence at protein level"/>
<evidence type="ECO:0000250" key="1">
    <source>
        <dbReference type="UniProtKB" id="P21589"/>
    </source>
</evidence>
<evidence type="ECO:0000250" key="2">
    <source>
        <dbReference type="UniProtKB" id="P50635"/>
    </source>
</evidence>
<evidence type="ECO:0000255" key="3"/>
<evidence type="ECO:0000269" key="4">
    <source>
    </source>
</evidence>
<evidence type="ECO:0000269" key="5">
    <source>
    </source>
</evidence>
<evidence type="ECO:0000269" key="6">
    <source>
    </source>
</evidence>
<evidence type="ECO:0000269" key="7">
    <source>
    </source>
</evidence>
<evidence type="ECO:0000303" key="8">
    <source>
    </source>
</evidence>
<evidence type="ECO:0000303" key="9">
    <source>
    </source>
</evidence>
<evidence type="ECO:0000305" key="10"/>
<evidence type="ECO:0000305" key="11">
    <source>
    </source>
</evidence>
<evidence type="ECO:0000312" key="12">
    <source>
        <dbReference type="EMBL" id="AAV90659.1"/>
    </source>
</evidence>
<evidence type="ECO:0000312" key="13">
    <source>
        <dbReference type="EMBL" id="BAJ14796.1"/>
    </source>
</evidence>
<comment type="function">
    <text evidence="5">Facilitates hematophagy by inhibiting ADP-dependent platelet aggregation in the host (PubMed:21842387). Cleaves adenosine triphosphate (ATP) and adenosine diphosphate (ADP) to adenosine monophosphate (AMP) and inorganic phosphate (PubMed:21842387). May reduce probing time by facilitating the speed of locating blood.</text>
</comment>
<comment type="catalytic activity">
    <reaction evidence="5">
        <text>a ribonucleoside 5'-triphosphate + 2 H2O = a ribonucleoside 5'-phosphate + 2 phosphate + 2 H(+)</text>
        <dbReference type="Rhea" id="RHEA:36795"/>
        <dbReference type="ChEBI" id="CHEBI:15377"/>
        <dbReference type="ChEBI" id="CHEBI:15378"/>
        <dbReference type="ChEBI" id="CHEBI:43474"/>
        <dbReference type="ChEBI" id="CHEBI:58043"/>
        <dbReference type="ChEBI" id="CHEBI:61557"/>
        <dbReference type="EC" id="3.6.1.5"/>
    </reaction>
    <physiologicalReaction direction="left-to-right" evidence="10">
        <dbReference type="Rhea" id="RHEA:36796"/>
    </physiologicalReaction>
</comment>
<comment type="cofactor">
    <cofactor evidence="2">
        <name>a divalent metal cation</name>
        <dbReference type="ChEBI" id="CHEBI:60240"/>
    </cofactor>
</comment>
<comment type="biophysicochemical properties">
    <kinetics>
        <KM evidence="5">11.6 uM for ATP</KM>
        <Vmax evidence="5">1.02 nmol/sec/ug enzyme toward ATP</Vmax>
    </kinetics>
</comment>
<comment type="subcellular location">
    <subcellularLocation>
        <location evidence="2">Secreted</location>
    </subcellularLocation>
</comment>
<comment type="tissue specificity">
    <text evidence="4 5 6 7">Female salivary gland (at protein level) (PubMed:17244540, PubMed:21842387, PubMed:23714164, PubMed:9564803). Low-level expression in male tissues (PubMed:17244540). Not detected in female carcasses without salivary glands (PubMed:17244540).</text>
</comment>
<comment type="allergen">
    <text evidence="7">Causes an allergic reaction in human (PubMed:9564803). Binds to IgE (PubMed:9564803).</text>
</comment>
<comment type="miscellaneous">
    <text evidence="5 6">Platelet aggregation is inhibited by 6% when 0.4 uM recombinant apyrase is added and by 9.5% when the concentration of recombinant apyrase is 0.8 uM (PubMed:21842387). Antibodies against the protein are found in the serum of individuals exposed to Aedes albopictus bites (PubMed:23714164).</text>
</comment>
<comment type="similarity">
    <text evidence="10">Belongs to the 5'-nucleotidase family.</text>
</comment>
<gene>
    <name evidence="10" type="primary">APY</name>
</gene>
<reference evidence="13" key="1">
    <citation type="journal article" date="2012" name="Parasitol. Res.">
        <title>Cloning, expression, and characterization of salivary apyrase from Aedes albopictus.</title>
        <authorList>
            <person name="Dong F."/>
            <person name="Fu Y."/>
            <person name="Li X."/>
            <person name="Jiang J."/>
            <person name="Sun J."/>
            <person name="Cheng X."/>
        </authorList>
    </citation>
    <scope>NUCLEOTIDE SEQUENCE [MRNA]</scope>
    <scope>FUNCTION</scope>
    <scope>CATALYTIC ACTIVITY</scope>
    <scope>BIOPHYSICOCHEMICAL PROPERTIES</scope>
    <scope>TISSUE SPECIFICITY</scope>
    <source>
        <tissue evidence="13">Salivary gland</tissue>
    </source>
</reference>
<reference evidence="12" key="2">
    <citation type="journal article" date="2007" name="Insect Biochem. Mol. Biol.">
        <title>An insight into the sialome of the adult female mosquito Aedes albopictus.</title>
        <authorList>
            <person name="Arca B."/>
            <person name="Lombardo F."/>
            <person name="Francischetti I.M."/>
            <person name="Pham V.M."/>
            <person name="Mestres-Simon M."/>
            <person name="Andersen J.F."/>
            <person name="Ribeiro J.M."/>
        </authorList>
    </citation>
    <scope>NUCLEOTIDE SEQUENCE [LARGE SCALE MRNA]</scope>
    <scope>PROTEIN SEQUENCE OF 26-45</scope>
    <scope>TISSUE SPECIFICITY</scope>
    <source>
        <tissue evidence="12">Salivary gland</tissue>
    </source>
</reference>
<reference evidence="10" key="3">
    <citation type="journal article" date="1998" name="J. Allergy Clin. Immunol.">
        <title>Immunoblot analysis of salivary allergens in 10 mosquito species with worldwide distribution and the human IgE responses to these allergens.</title>
        <authorList>
            <person name="Peng Z."/>
            <person name="Li H."/>
            <person name="Simons F.E."/>
        </authorList>
    </citation>
    <scope>TISSUE SPECIFICITY</scope>
    <scope>ALLERGEN</scope>
</reference>
<reference key="4">
    <citation type="journal article" date="2013" name="Insect Mol. Biol.">
        <title>First screening of Aedes albopictus immunogenic salivary proteins.</title>
        <authorList>
            <person name="Doucoure S."/>
            <person name="Cornelie S."/>
            <person name="Patramool S."/>
            <person name="Mouchet F."/>
            <person name="Demettre E."/>
            <person name="Seveno M."/>
            <person name="Dehecq J.S."/>
            <person name="Rutee H."/>
            <person name="Herve J.P."/>
            <person name="Favier F."/>
            <person name="Misse D."/>
            <person name="Gasque P."/>
            <person name="Remoue F."/>
        </authorList>
    </citation>
    <scope>IDENTIFICATION BY MASS SPECTROMETRY</scope>
    <scope>TISSUE SPECIFICITY</scope>
</reference>